<gene>
    <name evidence="1" type="primary">murQ</name>
    <name type="ordered locus">BCA_0885</name>
</gene>
<dbReference type="EC" id="4.2.1.126" evidence="1"/>
<dbReference type="EMBL" id="CP001407">
    <property type="protein sequence ID" value="ACO25917.1"/>
    <property type="molecule type" value="Genomic_DNA"/>
</dbReference>
<dbReference type="RefSeq" id="WP_000892330.1">
    <property type="nucleotide sequence ID" value="NC_012472.1"/>
</dbReference>
<dbReference type="SMR" id="C1EYT0"/>
<dbReference type="KEGG" id="bcx:BCA_0885"/>
<dbReference type="PATRIC" id="fig|572264.18.peg.828"/>
<dbReference type="UniPathway" id="UPA00342"/>
<dbReference type="Proteomes" id="UP000002210">
    <property type="component" value="Chromosome"/>
</dbReference>
<dbReference type="GO" id="GO:0097367">
    <property type="term" value="F:carbohydrate derivative binding"/>
    <property type="evidence" value="ECO:0007669"/>
    <property type="project" value="InterPro"/>
</dbReference>
<dbReference type="GO" id="GO:0016835">
    <property type="term" value="F:carbon-oxygen lyase activity"/>
    <property type="evidence" value="ECO:0007669"/>
    <property type="project" value="UniProtKB-UniRule"/>
</dbReference>
<dbReference type="GO" id="GO:0016803">
    <property type="term" value="F:ether hydrolase activity"/>
    <property type="evidence" value="ECO:0007669"/>
    <property type="project" value="TreeGrafter"/>
</dbReference>
<dbReference type="GO" id="GO:0046348">
    <property type="term" value="P:amino sugar catabolic process"/>
    <property type="evidence" value="ECO:0007669"/>
    <property type="project" value="InterPro"/>
</dbReference>
<dbReference type="GO" id="GO:0097173">
    <property type="term" value="P:N-acetylmuramic acid catabolic process"/>
    <property type="evidence" value="ECO:0007669"/>
    <property type="project" value="UniProtKB-UniPathway"/>
</dbReference>
<dbReference type="GO" id="GO:0009254">
    <property type="term" value="P:peptidoglycan turnover"/>
    <property type="evidence" value="ECO:0007669"/>
    <property type="project" value="TreeGrafter"/>
</dbReference>
<dbReference type="CDD" id="cd05007">
    <property type="entry name" value="SIS_Etherase"/>
    <property type="match status" value="1"/>
</dbReference>
<dbReference type="FunFam" id="1.10.8.1080:FF:000001">
    <property type="entry name" value="N-acetylmuramic acid 6-phosphate etherase"/>
    <property type="match status" value="1"/>
</dbReference>
<dbReference type="FunFam" id="3.40.50.10490:FF:000014">
    <property type="entry name" value="N-acetylmuramic acid 6-phosphate etherase"/>
    <property type="match status" value="1"/>
</dbReference>
<dbReference type="Gene3D" id="1.10.8.1080">
    <property type="match status" value="1"/>
</dbReference>
<dbReference type="Gene3D" id="3.40.50.10490">
    <property type="entry name" value="Glucose-6-phosphate isomerase like protein, domain 1"/>
    <property type="match status" value="1"/>
</dbReference>
<dbReference type="HAMAP" id="MF_00068">
    <property type="entry name" value="MurQ"/>
    <property type="match status" value="1"/>
</dbReference>
<dbReference type="InterPro" id="IPR005488">
    <property type="entry name" value="Etherase_MurQ"/>
</dbReference>
<dbReference type="InterPro" id="IPR005486">
    <property type="entry name" value="Glucokinase_regulatory_CS"/>
</dbReference>
<dbReference type="InterPro" id="IPR040190">
    <property type="entry name" value="MURQ/GCKR"/>
</dbReference>
<dbReference type="InterPro" id="IPR001347">
    <property type="entry name" value="SIS_dom"/>
</dbReference>
<dbReference type="InterPro" id="IPR046348">
    <property type="entry name" value="SIS_dom_sf"/>
</dbReference>
<dbReference type="NCBIfam" id="TIGR00274">
    <property type="entry name" value="N-acetylmuramic acid 6-phosphate etherase"/>
    <property type="match status" value="1"/>
</dbReference>
<dbReference type="NCBIfam" id="NF003915">
    <property type="entry name" value="PRK05441.1"/>
    <property type="match status" value="1"/>
</dbReference>
<dbReference type="NCBIfam" id="NF009222">
    <property type="entry name" value="PRK12570.1"/>
    <property type="match status" value="1"/>
</dbReference>
<dbReference type="PANTHER" id="PTHR10088">
    <property type="entry name" value="GLUCOKINASE REGULATORY PROTEIN"/>
    <property type="match status" value="1"/>
</dbReference>
<dbReference type="PANTHER" id="PTHR10088:SF4">
    <property type="entry name" value="GLUCOKINASE REGULATORY PROTEIN"/>
    <property type="match status" value="1"/>
</dbReference>
<dbReference type="Pfam" id="PF22645">
    <property type="entry name" value="GKRP_SIS_N"/>
    <property type="match status" value="1"/>
</dbReference>
<dbReference type="SUPFAM" id="SSF53697">
    <property type="entry name" value="SIS domain"/>
    <property type="match status" value="1"/>
</dbReference>
<dbReference type="PROSITE" id="PS01272">
    <property type="entry name" value="GCKR"/>
    <property type="match status" value="1"/>
</dbReference>
<dbReference type="PROSITE" id="PS51464">
    <property type="entry name" value="SIS"/>
    <property type="match status" value="1"/>
</dbReference>
<reference key="1">
    <citation type="submission" date="2009-02" db="EMBL/GenBank/DDBJ databases">
        <title>Genome sequence of Bacillus cereus 03BB102.</title>
        <authorList>
            <person name="Dodson R.J."/>
            <person name="Jackson P."/>
            <person name="Munk A.C."/>
            <person name="Brettin T."/>
            <person name="Bruce D."/>
            <person name="Detter C."/>
            <person name="Tapia R."/>
            <person name="Han C."/>
            <person name="Sutton G."/>
            <person name="Sims D."/>
        </authorList>
    </citation>
    <scope>NUCLEOTIDE SEQUENCE [LARGE SCALE GENOMIC DNA]</scope>
    <source>
        <strain>03BB102</strain>
    </source>
</reference>
<sequence length="294" mass="31978">MLENLSTEHRNEKTMNLDEMNIKEVLQSMNEEDRTVALAVEKEIEHIEKVVRVVIQSFEEEGRLIYIGAGTSGRLGILDAVECPPTFGTDDKMVQGFIAGGLKAFTKAVEGAEDREELAEEDLKSIGLNEKDTVIGIAASGRTPYVIGGLKYANSVGASTASISCNKNAEISKYAKLNVEVETGAEILTGSTRLKAGTAQKLVLNMISTASMIGVGKVYKNLMVDVQSTNEKLVERSKRIIVEATGASYEVAAEYYEKAERNVKAAIVMVLLQCEYGEALEKLKEAKGFVKKAL</sequence>
<protein>
    <recommendedName>
        <fullName evidence="1">N-acetylmuramic acid 6-phosphate etherase</fullName>
        <shortName evidence="1">MurNAc-6-P etherase</shortName>
        <ecNumber evidence="1">4.2.1.126</ecNumber>
    </recommendedName>
    <alternativeName>
        <fullName evidence="1">N-acetylmuramic acid 6-phosphate hydrolase</fullName>
    </alternativeName>
    <alternativeName>
        <fullName evidence="1">N-acetylmuramic acid 6-phosphate lyase</fullName>
    </alternativeName>
</protein>
<feature type="chain" id="PRO_1000118007" description="N-acetylmuramic acid 6-phosphate etherase">
    <location>
        <begin position="1"/>
        <end position="294"/>
    </location>
</feature>
<feature type="domain" description="SIS" evidence="1">
    <location>
        <begin position="54"/>
        <end position="217"/>
    </location>
</feature>
<feature type="active site" description="Proton donor" evidence="1">
    <location>
        <position position="82"/>
    </location>
</feature>
<feature type="active site" evidence="1">
    <location>
        <position position="113"/>
    </location>
</feature>
<evidence type="ECO:0000255" key="1">
    <source>
        <dbReference type="HAMAP-Rule" id="MF_00068"/>
    </source>
</evidence>
<proteinExistence type="inferred from homology"/>
<name>MURQ_BACC3</name>
<accession>C1EYT0</accession>
<keyword id="KW-0119">Carbohydrate metabolism</keyword>
<keyword id="KW-0456">Lyase</keyword>
<organism>
    <name type="scientific">Bacillus cereus (strain 03BB102)</name>
    <dbReference type="NCBI Taxonomy" id="572264"/>
    <lineage>
        <taxon>Bacteria</taxon>
        <taxon>Bacillati</taxon>
        <taxon>Bacillota</taxon>
        <taxon>Bacilli</taxon>
        <taxon>Bacillales</taxon>
        <taxon>Bacillaceae</taxon>
        <taxon>Bacillus</taxon>
        <taxon>Bacillus cereus group</taxon>
    </lineage>
</organism>
<comment type="function">
    <text evidence="1">Specifically catalyzes the cleavage of the D-lactyl ether substituent of MurNAc 6-phosphate, producing GlcNAc 6-phosphate and D-lactate.</text>
</comment>
<comment type="catalytic activity">
    <reaction evidence="1">
        <text>N-acetyl-D-muramate 6-phosphate + H2O = N-acetyl-D-glucosamine 6-phosphate + (R)-lactate</text>
        <dbReference type="Rhea" id="RHEA:26410"/>
        <dbReference type="ChEBI" id="CHEBI:15377"/>
        <dbReference type="ChEBI" id="CHEBI:16004"/>
        <dbReference type="ChEBI" id="CHEBI:57513"/>
        <dbReference type="ChEBI" id="CHEBI:58722"/>
        <dbReference type="EC" id="4.2.1.126"/>
    </reaction>
</comment>
<comment type="pathway">
    <text evidence="1">Amino-sugar metabolism; N-acetylmuramate degradation.</text>
</comment>
<comment type="subunit">
    <text evidence="1">Homodimer.</text>
</comment>
<comment type="miscellaneous">
    <text evidence="1">A lyase-type mechanism (elimination/hydration) is suggested for the cleavage of the lactyl ether bond of MurNAc 6-phosphate, with the formation of an alpha,beta-unsaturated aldehyde intermediate with (E)-stereochemistry, followed by the syn addition of water to give product.</text>
</comment>
<comment type="similarity">
    <text evidence="1">Belongs to the GCKR-like family. MurNAc-6-P etherase subfamily.</text>
</comment>